<comment type="function">
    <text evidence="1">Catalyzes the reversible phosphorylation of UMP to UDP.</text>
</comment>
<comment type="catalytic activity">
    <reaction evidence="1">
        <text>UMP + ATP = UDP + ADP</text>
        <dbReference type="Rhea" id="RHEA:24400"/>
        <dbReference type="ChEBI" id="CHEBI:30616"/>
        <dbReference type="ChEBI" id="CHEBI:57865"/>
        <dbReference type="ChEBI" id="CHEBI:58223"/>
        <dbReference type="ChEBI" id="CHEBI:456216"/>
        <dbReference type="EC" id="2.7.4.22"/>
    </reaction>
</comment>
<comment type="activity regulation">
    <text evidence="1">Inhibited by UTP.</text>
</comment>
<comment type="pathway">
    <text evidence="1">Pyrimidine metabolism; CTP biosynthesis via de novo pathway; UDP from UMP (UMPK route): step 1/1.</text>
</comment>
<comment type="subunit">
    <text evidence="1">Homohexamer.</text>
</comment>
<comment type="subcellular location">
    <subcellularLocation>
        <location evidence="1">Cytoplasm</location>
    </subcellularLocation>
</comment>
<comment type="similarity">
    <text evidence="1">Belongs to the UMP kinase family.</text>
</comment>
<gene>
    <name evidence="1" type="primary">pyrH</name>
    <name type="ordered locus">TTHA0859</name>
</gene>
<reference key="1">
    <citation type="submission" date="2004-11" db="EMBL/GenBank/DDBJ databases">
        <title>Complete genome sequence of Thermus thermophilus HB8.</title>
        <authorList>
            <person name="Masui R."/>
            <person name="Kurokawa K."/>
            <person name="Nakagawa N."/>
            <person name="Tokunaga F."/>
            <person name="Koyama Y."/>
            <person name="Shibata T."/>
            <person name="Oshima T."/>
            <person name="Yokoyama S."/>
            <person name="Yasunaga T."/>
            <person name="Kuramitsu S."/>
        </authorList>
    </citation>
    <scope>NUCLEOTIDE SEQUENCE [LARGE SCALE GENOMIC DNA]</scope>
    <source>
        <strain>ATCC 27634 / DSM 579 / HB8</strain>
    </source>
</reference>
<reference key="2">
    <citation type="journal article" date="1996" name="Eur. J. Biochem.">
        <title>Elongation factor Ts from Thermus thermophilus -- overproduction in Escherichia coli, quaternary structure and interaction with elongation factor Tu.</title>
        <authorList>
            <person name="Blank J."/>
            <person name="Nock S."/>
            <person name="Kreutzer R."/>
            <person name="Sprinzl M."/>
        </authorList>
    </citation>
    <scope>NUCLEOTIDE SEQUENCE [GENOMIC DNA] OF 1-70</scope>
</reference>
<proteinExistence type="evidence at protein level"/>
<name>PYRH_THET8</name>
<keyword id="KW-0002">3D-structure</keyword>
<keyword id="KW-0067">ATP-binding</keyword>
<keyword id="KW-0963">Cytoplasm</keyword>
<keyword id="KW-0418">Kinase</keyword>
<keyword id="KW-0547">Nucleotide-binding</keyword>
<keyword id="KW-0665">Pyrimidine biosynthesis</keyword>
<keyword id="KW-1185">Reference proteome</keyword>
<keyword id="KW-0808">Transferase</keyword>
<protein>
    <recommendedName>
        <fullName evidence="1">Uridylate kinase</fullName>
        <shortName evidence="1">UK</shortName>
        <ecNumber evidence="1">2.7.4.22</ecNumber>
    </recommendedName>
    <alternativeName>
        <fullName evidence="1">Uridine monophosphate kinase</fullName>
        <shortName evidence="1">UMP kinase</shortName>
        <shortName evidence="1">UMPK</shortName>
    </alternativeName>
</protein>
<evidence type="ECO:0000255" key="1">
    <source>
        <dbReference type="HAMAP-Rule" id="MF_01220"/>
    </source>
</evidence>
<sequence>MKYKRVLLKLSGEFLTRNGFGIEPEATQALAREIKAAYDTGVQLAIVIGAGNLWRGARQGVGMDRATADYIGMLATIMNALALQDALESLGVPTRVQTALTITQVAEPYIRRRALRHLEKERIVIFGGGTGNPFFSTDTAAALRALEVGAEVVLMAKNKVDGVYSDDPRKNPEAVRFDELTYLEVLNRGLQVMDTTAITLCMEAGLPIVVFDIFKPGALVGIIQGEKVGTLIH</sequence>
<accession>P43891</accession>
<accession>Q5SJZ3</accession>
<feature type="chain" id="PRO_0000143900" description="Uridylate kinase">
    <location>
        <begin position="1"/>
        <end position="233"/>
    </location>
</feature>
<feature type="binding site" evidence="1">
    <location>
        <begin position="9"/>
        <end position="12"/>
    </location>
    <ligand>
        <name>ATP</name>
        <dbReference type="ChEBI" id="CHEBI:30616"/>
    </ligand>
</feature>
<feature type="binding site" evidence="1">
    <location>
        <position position="51"/>
    </location>
    <ligand>
        <name>ATP</name>
        <dbReference type="ChEBI" id="CHEBI:30616"/>
    </ligand>
</feature>
<feature type="binding site" evidence="1">
    <location>
        <position position="55"/>
    </location>
    <ligand>
        <name>ATP</name>
        <dbReference type="ChEBI" id="CHEBI:30616"/>
    </ligand>
</feature>
<feature type="binding site" evidence="1">
    <location>
        <position position="69"/>
    </location>
    <ligand>
        <name>UMP</name>
        <dbReference type="ChEBI" id="CHEBI:57865"/>
    </ligand>
</feature>
<feature type="binding site" evidence="1">
    <location>
        <begin position="130"/>
        <end position="137"/>
    </location>
    <ligand>
        <name>UMP</name>
        <dbReference type="ChEBI" id="CHEBI:57865"/>
    </ligand>
</feature>
<feature type="binding site" evidence="1">
    <location>
        <position position="158"/>
    </location>
    <ligand>
        <name>ATP</name>
        <dbReference type="ChEBI" id="CHEBI:30616"/>
    </ligand>
</feature>
<feature type="binding site" evidence="1">
    <location>
        <position position="164"/>
    </location>
    <ligand>
        <name>ATP</name>
        <dbReference type="ChEBI" id="CHEBI:30616"/>
    </ligand>
</feature>
<feature type="binding site" evidence="1">
    <location>
        <position position="167"/>
    </location>
    <ligand>
        <name>ATP</name>
        <dbReference type="ChEBI" id="CHEBI:30616"/>
    </ligand>
</feature>
<dbReference type="EC" id="2.7.4.22" evidence="1"/>
<dbReference type="EMBL" id="AP008226">
    <property type="protein sequence ID" value="BAD70682.1"/>
    <property type="molecule type" value="Genomic_DNA"/>
</dbReference>
<dbReference type="EMBL" id="X83598">
    <property type="protein sequence ID" value="CAA58579.1"/>
    <property type="molecule type" value="Genomic_DNA"/>
</dbReference>
<dbReference type="PIR" id="S51096">
    <property type="entry name" value="S51096"/>
</dbReference>
<dbReference type="RefSeq" id="WP_011172952.1">
    <property type="nucleotide sequence ID" value="NC_006461.1"/>
</dbReference>
<dbReference type="RefSeq" id="YP_144125.1">
    <property type="nucleotide sequence ID" value="NC_006461.1"/>
</dbReference>
<dbReference type="PDB" id="8YH1">
    <property type="method" value="X-ray"/>
    <property type="resolution" value="2.60 A"/>
    <property type="chains" value="A/B/C/D/E/F/G/H/I=1-233"/>
</dbReference>
<dbReference type="PDBsum" id="8YH1"/>
<dbReference type="SMR" id="P43891"/>
<dbReference type="EnsemblBacteria" id="BAD70682">
    <property type="protein sequence ID" value="BAD70682"/>
    <property type="gene ID" value="BAD70682"/>
</dbReference>
<dbReference type="GeneID" id="3170118"/>
<dbReference type="KEGG" id="ttj:TTHA0859"/>
<dbReference type="PATRIC" id="fig|300852.9.peg.853"/>
<dbReference type="eggNOG" id="COG0528">
    <property type="taxonomic scope" value="Bacteria"/>
</dbReference>
<dbReference type="HOGENOM" id="CLU_033861_0_0_0"/>
<dbReference type="PhylomeDB" id="P43891"/>
<dbReference type="UniPathway" id="UPA00159">
    <property type="reaction ID" value="UER00275"/>
</dbReference>
<dbReference type="Proteomes" id="UP000000532">
    <property type="component" value="Chromosome"/>
</dbReference>
<dbReference type="GO" id="GO:0005737">
    <property type="term" value="C:cytoplasm"/>
    <property type="evidence" value="ECO:0007669"/>
    <property type="project" value="UniProtKB-SubCell"/>
</dbReference>
<dbReference type="GO" id="GO:0005524">
    <property type="term" value="F:ATP binding"/>
    <property type="evidence" value="ECO:0007669"/>
    <property type="project" value="UniProtKB-KW"/>
</dbReference>
<dbReference type="GO" id="GO:0033862">
    <property type="term" value="F:UMP kinase activity"/>
    <property type="evidence" value="ECO:0007669"/>
    <property type="project" value="UniProtKB-EC"/>
</dbReference>
<dbReference type="GO" id="GO:0044210">
    <property type="term" value="P:'de novo' CTP biosynthetic process"/>
    <property type="evidence" value="ECO:0007669"/>
    <property type="project" value="UniProtKB-UniRule"/>
</dbReference>
<dbReference type="GO" id="GO:0006225">
    <property type="term" value="P:UDP biosynthetic process"/>
    <property type="evidence" value="ECO:0007669"/>
    <property type="project" value="TreeGrafter"/>
</dbReference>
<dbReference type="CDD" id="cd04254">
    <property type="entry name" value="AAK_UMPK-PyrH-Ec"/>
    <property type="match status" value="1"/>
</dbReference>
<dbReference type="FunFam" id="3.40.1160.10:FF:000001">
    <property type="entry name" value="Uridylate kinase"/>
    <property type="match status" value="1"/>
</dbReference>
<dbReference type="Gene3D" id="3.40.1160.10">
    <property type="entry name" value="Acetylglutamate kinase-like"/>
    <property type="match status" value="1"/>
</dbReference>
<dbReference type="HAMAP" id="MF_01220_B">
    <property type="entry name" value="PyrH_B"/>
    <property type="match status" value="1"/>
</dbReference>
<dbReference type="InterPro" id="IPR036393">
    <property type="entry name" value="AceGlu_kinase-like_sf"/>
</dbReference>
<dbReference type="InterPro" id="IPR001048">
    <property type="entry name" value="Asp/Glu/Uridylate_kinase"/>
</dbReference>
<dbReference type="InterPro" id="IPR011817">
    <property type="entry name" value="Uridylate_kinase"/>
</dbReference>
<dbReference type="InterPro" id="IPR015963">
    <property type="entry name" value="Uridylate_kinase_bac"/>
</dbReference>
<dbReference type="NCBIfam" id="TIGR02075">
    <property type="entry name" value="pyrH_bact"/>
    <property type="match status" value="1"/>
</dbReference>
<dbReference type="PANTHER" id="PTHR42833">
    <property type="entry name" value="URIDYLATE KINASE"/>
    <property type="match status" value="1"/>
</dbReference>
<dbReference type="PANTHER" id="PTHR42833:SF4">
    <property type="entry name" value="URIDYLATE KINASE PUMPKIN, CHLOROPLASTIC"/>
    <property type="match status" value="1"/>
</dbReference>
<dbReference type="Pfam" id="PF00696">
    <property type="entry name" value="AA_kinase"/>
    <property type="match status" value="1"/>
</dbReference>
<dbReference type="PIRSF" id="PIRSF005650">
    <property type="entry name" value="Uridylate_kin"/>
    <property type="match status" value="1"/>
</dbReference>
<dbReference type="SUPFAM" id="SSF53633">
    <property type="entry name" value="Carbamate kinase-like"/>
    <property type="match status" value="1"/>
</dbReference>
<organism>
    <name type="scientific">Thermus thermophilus (strain ATCC 27634 / DSM 579 / HB8)</name>
    <dbReference type="NCBI Taxonomy" id="300852"/>
    <lineage>
        <taxon>Bacteria</taxon>
        <taxon>Thermotogati</taxon>
        <taxon>Deinococcota</taxon>
        <taxon>Deinococci</taxon>
        <taxon>Thermales</taxon>
        <taxon>Thermaceae</taxon>
        <taxon>Thermus</taxon>
    </lineage>
</organism>